<dbReference type="EC" id="3.1.-.-" evidence="1"/>
<dbReference type="EMBL" id="AM286280">
    <property type="protein sequence ID" value="CAL08632.1"/>
    <property type="molecule type" value="Genomic_DNA"/>
</dbReference>
<dbReference type="SMR" id="Q14IK7"/>
<dbReference type="KEGG" id="ftf:FTF0616c"/>
<dbReference type="HOGENOM" id="CLU_106710_3_3_6"/>
<dbReference type="GO" id="GO:0005737">
    <property type="term" value="C:cytoplasm"/>
    <property type="evidence" value="ECO:0007669"/>
    <property type="project" value="UniProtKB-SubCell"/>
</dbReference>
<dbReference type="GO" id="GO:0004222">
    <property type="term" value="F:metalloendopeptidase activity"/>
    <property type="evidence" value="ECO:0007669"/>
    <property type="project" value="InterPro"/>
</dbReference>
<dbReference type="GO" id="GO:0004521">
    <property type="term" value="F:RNA endonuclease activity"/>
    <property type="evidence" value="ECO:0007669"/>
    <property type="project" value="UniProtKB-UniRule"/>
</dbReference>
<dbReference type="GO" id="GO:0008270">
    <property type="term" value="F:zinc ion binding"/>
    <property type="evidence" value="ECO:0007669"/>
    <property type="project" value="UniProtKB-UniRule"/>
</dbReference>
<dbReference type="GO" id="GO:0006364">
    <property type="term" value="P:rRNA processing"/>
    <property type="evidence" value="ECO:0007669"/>
    <property type="project" value="UniProtKB-UniRule"/>
</dbReference>
<dbReference type="Gene3D" id="3.40.390.30">
    <property type="entry name" value="Metalloproteases ('zincins'), catalytic domain"/>
    <property type="match status" value="1"/>
</dbReference>
<dbReference type="HAMAP" id="MF_00009">
    <property type="entry name" value="Endoribonucl_YbeY"/>
    <property type="match status" value="1"/>
</dbReference>
<dbReference type="InterPro" id="IPR023091">
    <property type="entry name" value="MetalPrtase_cat_dom_sf_prd"/>
</dbReference>
<dbReference type="InterPro" id="IPR002036">
    <property type="entry name" value="YbeY"/>
</dbReference>
<dbReference type="InterPro" id="IPR020549">
    <property type="entry name" value="YbeY_CS"/>
</dbReference>
<dbReference type="NCBIfam" id="TIGR00043">
    <property type="entry name" value="rRNA maturation RNase YbeY"/>
    <property type="match status" value="1"/>
</dbReference>
<dbReference type="PANTHER" id="PTHR46986">
    <property type="entry name" value="ENDORIBONUCLEASE YBEY, CHLOROPLASTIC"/>
    <property type="match status" value="1"/>
</dbReference>
<dbReference type="PANTHER" id="PTHR46986:SF1">
    <property type="entry name" value="ENDORIBONUCLEASE YBEY, CHLOROPLASTIC"/>
    <property type="match status" value="1"/>
</dbReference>
<dbReference type="Pfam" id="PF02130">
    <property type="entry name" value="YbeY"/>
    <property type="match status" value="1"/>
</dbReference>
<dbReference type="SUPFAM" id="SSF55486">
    <property type="entry name" value="Metalloproteases ('zincins'), catalytic domain"/>
    <property type="match status" value="1"/>
</dbReference>
<dbReference type="PROSITE" id="PS01306">
    <property type="entry name" value="UPF0054"/>
    <property type="match status" value="1"/>
</dbReference>
<accession>Q14IK7</accession>
<feature type="chain" id="PRO_0000284210" description="Endoribonuclease YbeY">
    <location>
        <begin position="1"/>
        <end position="168"/>
    </location>
</feature>
<feature type="binding site" evidence="1">
    <location>
        <position position="123"/>
    </location>
    <ligand>
        <name>Zn(2+)</name>
        <dbReference type="ChEBI" id="CHEBI:29105"/>
        <note>catalytic</note>
    </ligand>
</feature>
<feature type="binding site" evidence="1">
    <location>
        <position position="127"/>
    </location>
    <ligand>
        <name>Zn(2+)</name>
        <dbReference type="ChEBI" id="CHEBI:29105"/>
        <note>catalytic</note>
    </ligand>
</feature>
<feature type="binding site" evidence="1">
    <location>
        <position position="133"/>
    </location>
    <ligand>
        <name>Zn(2+)</name>
        <dbReference type="ChEBI" id="CHEBI:29105"/>
        <note>catalytic</note>
    </ligand>
</feature>
<name>YBEY_FRAT1</name>
<comment type="function">
    <text evidence="1">Single strand-specific metallo-endoribonuclease involved in late-stage 70S ribosome quality control and in maturation of the 3' terminus of the 16S rRNA.</text>
</comment>
<comment type="cofactor">
    <cofactor evidence="1">
        <name>Zn(2+)</name>
        <dbReference type="ChEBI" id="CHEBI:29105"/>
    </cofactor>
    <text evidence="1">Binds 1 zinc ion.</text>
</comment>
<comment type="subcellular location">
    <subcellularLocation>
        <location evidence="1">Cytoplasm</location>
    </subcellularLocation>
</comment>
<comment type="similarity">
    <text evidence="1">Belongs to the endoribonuclease YbeY family.</text>
</comment>
<organism>
    <name type="scientific">Francisella tularensis subsp. tularensis (strain FSC 198)</name>
    <dbReference type="NCBI Taxonomy" id="393115"/>
    <lineage>
        <taxon>Bacteria</taxon>
        <taxon>Pseudomonadati</taxon>
        <taxon>Pseudomonadota</taxon>
        <taxon>Gammaproteobacteria</taxon>
        <taxon>Thiotrichales</taxon>
        <taxon>Francisellaceae</taxon>
        <taxon>Francisella</taxon>
    </lineage>
</organism>
<gene>
    <name evidence="1" type="primary">ybeY</name>
    <name type="ordered locus">FTF0616c</name>
</gene>
<keyword id="KW-0963">Cytoplasm</keyword>
<keyword id="KW-0255">Endonuclease</keyword>
<keyword id="KW-0378">Hydrolase</keyword>
<keyword id="KW-0479">Metal-binding</keyword>
<keyword id="KW-0540">Nuclease</keyword>
<keyword id="KW-0690">Ribosome biogenesis</keyword>
<keyword id="KW-0698">rRNA processing</keyword>
<keyword id="KW-0862">Zinc</keyword>
<sequence>MKRKLKMDNLNINFINDDEHPIPSQDLLLKCLQLVANKHHISHAEVNLNIVSNDEIQQINKQFRNKDKPTNIISFEFEKPQGLPDDIANDFLGDIVIAPAVLENEAKEQNKELNDHWQHIFIHGLLHLLGYDHQDDQEAEVMENLEIQLLAQLGIANPYIEQENQNGR</sequence>
<proteinExistence type="inferred from homology"/>
<protein>
    <recommendedName>
        <fullName evidence="1">Endoribonuclease YbeY</fullName>
        <ecNumber evidence="1">3.1.-.-</ecNumber>
    </recommendedName>
</protein>
<reference key="1">
    <citation type="journal article" date="2007" name="PLoS ONE">
        <title>Genome sequencing shows that European isolates of Francisella tularensis subspecies tularensis are almost identical to US laboratory strain Schu S4.</title>
        <authorList>
            <person name="Chaudhuri R.R."/>
            <person name="Ren C.-P."/>
            <person name="Desmond L."/>
            <person name="Vincent G.A."/>
            <person name="Silman N.J."/>
            <person name="Brehm J.K."/>
            <person name="Elmore M.J."/>
            <person name="Hudson M.J."/>
            <person name="Forsman M."/>
            <person name="Isherwood K.E."/>
            <person name="Gurycova D."/>
            <person name="Minton N.P."/>
            <person name="Titball R.W."/>
            <person name="Pallen M.J."/>
            <person name="Vipond R."/>
        </authorList>
    </citation>
    <scope>NUCLEOTIDE SEQUENCE [LARGE SCALE GENOMIC DNA]</scope>
    <source>
        <strain>FSC 198</strain>
    </source>
</reference>
<evidence type="ECO:0000255" key="1">
    <source>
        <dbReference type="HAMAP-Rule" id="MF_00009"/>
    </source>
</evidence>